<name>PGSA_MYCGE</name>
<dbReference type="EC" id="2.7.8.5"/>
<dbReference type="EMBL" id="L43967">
    <property type="protein sequence ID" value="AAC71332.1"/>
    <property type="molecule type" value="Genomic_DNA"/>
</dbReference>
<dbReference type="PIR" id="F64212">
    <property type="entry name" value="F64212"/>
</dbReference>
<dbReference type="SMR" id="P47360"/>
<dbReference type="FunCoup" id="P47360">
    <property type="interactions" value="192"/>
</dbReference>
<dbReference type="STRING" id="243273.MG_114"/>
<dbReference type="KEGG" id="mge:MG_114"/>
<dbReference type="eggNOG" id="COG0558">
    <property type="taxonomic scope" value="Bacteria"/>
</dbReference>
<dbReference type="HOGENOM" id="CLU_051314_2_3_14"/>
<dbReference type="InParanoid" id="P47360"/>
<dbReference type="UniPathway" id="UPA00084">
    <property type="reaction ID" value="UER00503"/>
</dbReference>
<dbReference type="Proteomes" id="UP000000807">
    <property type="component" value="Chromosome"/>
</dbReference>
<dbReference type="GO" id="GO:0005886">
    <property type="term" value="C:plasma membrane"/>
    <property type="evidence" value="ECO:0007669"/>
    <property type="project" value="UniProtKB-SubCell"/>
</dbReference>
<dbReference type="GO" id="GO:0008444">
    <property type="term" value="F:CDP-diacylglycerol-glycerol-3-phosphate 3-phosphatidyltransferase activity"/>
    <property type="evidence" value="ECO:0007669"/>
    <property type="project" value="UniProtKB-EC"/>
</dbReference>
<dbReference type="GO" id="GO:0046474">
    <property type="term" value="P:glycerophospholipid biosynthetic process"/>
    <property type="evidence" value="ECO:0000318"/>
    <property type="project" value="GO_Central"/>
</dbReference>
<dbReference type="GO" id="GO:0006655">
    <property type="term" value="P:phosphatidylglycerol biosynthetic process"/>
    <property type="evidence" value="ECO:0007669"/>
    <property type="project" value="UniProtKB-UniPathway"/>
</dbReference>
<dbReference type="Gene3D" id="1.20.120.1760">
    <property type="match status" value="1"/>
</dbReference>
<dbReference type="InterPro" id="IPR050324">
    <property type="entry name" value="CDP-alcohol_PTase-I"/>
</dbReference>
<dbReference type="InterPro" id="IPR000462">
    <property type="entry name" value="CDP-OH_P_trans"/>
</dbReference>
<dbReference type="InterPro" id="IPR043130">
    <property type="entry name" value="CDP-OH_PTrfase_TM_dom"/>
</dbReference>
<dbReference type="InterPro" id="IPR048254">
    <property type="entry name" value="CDP_ALCOHOL_P_TRANSF_CS"/>
</dbReference>
<dbReference type="InterPro" id="IPR004570">
    <property type="entry name" value="Phosphatidylglycerol_P_synth"/>
</dbReference>
<dbReference type="NCBIfam" id="TIGR00560">
    <property type="entry name" value="pgsA"/>
    <property type="match status" value="1"/>
</dbReference>
<dbReference type="PANTHER" id="PTHR14269:SF62">
    <property type="entry name" value="CDP-DIACYLGLYCEROL--GLYCEROL-3-PHOSPHATE 3-PHOSPHATIDYLTRANSFERASE 1, CHLOROPLASTIC"/>
    <property type="match status" value="1"/>
</dbReference>
<dbReference type="PANTHER" id="PTHR14269">
    <property type="entry name" value="CDP-DIACYLGLYCEROL--GLYCEROL-3-PHOSPHATE 3-PHOSPHATIDYLTRANSFERASE-RELATED"/>
    <property type="match status" value="1"/>
</dbReference>
<dbReference type="Pfam" id="PF01066">
    <property type="entry name" value="CDP-OH_P_transf"/>
    <property type="match status" value="1"/>
</dbReference>
<dbReference type="PIRSF" id="PIRSF000847">
    <property type="entry name" value="Phos_ph_gly_syn"/>
    <property type="match status" value="1"/>
</dbReference>
<dbReference type="PROSITE" id="PS00379">
    <property type="entry name" value="CDP_ALCOHOL_P_TRANSF"/>
    <property type="match status" value="1"/>
</dbReference>
<keyword id="KW-1003">Cell membrane</keyword>
<keyword id="KW-0444">Lipid biosynthesis</keyword>
<keyword id="KW-0443">Lipid metabolism</keyword>
<keyword id="KW-0472">Membrane</keyword>
<keyword id="KW-0594">Phospholipid biosynthesis</keyword>
<keyword id="KW-1208">Phospholipid metabolism</keyword>
<keyword id="KW-1185">Reference proteome</keyword>
<keyword id="KW-0808">Transferase</keyword>
<keyword id="KW-0812">Transmembrane</keyword>
<keyword id="KW-1133">Transmembrane helix</keyword>
<proteinExistence type="inferred from homology"/>
<feature type="chain" id="PRO_0000056777" description="CDP-diacylglycerol--glycerol-3-phosphate 3-phosphatidyltransferase">
    <location>
        <begin position="1"/>
        <end position="236"/>
    </location>
</feature>
<feature type="transmembrane region" description="Helical" evidence="2">
    <location>
        <begin position="39"/>
        <end position="59"/>
    </location>
</feature>
<feature type="transmembrane region" description="Helical" evidence="2">
    <location>
        <begin position="66"/>
        <end position="86"/>
    </location>
</feature>
<feature type="transmembrane region" description="Helical" evidence="2">
    <location>
        <begin position="120"/>
        <end position="140"/>
    </location>
</feature>
<feature type="transmembrane region" description="Helical" evidence="2">
    <location>
        <begin position="163"/>
        <end position="183"/>
    </location>
</feature>
<feature type="transmembrane region" description="Helical" evidence="2">
    <location>
        <begin position="196"/>
        <end position="216"/>
    </location>
</feature>
<organism>
    <name type="scientific">Mycoplasma genitalium (strain ATCC 33530 / DSM 19775 / NCTC 10195 / G37)</name>
    <name type="common">Mycoplasmoides genitalium</name>
    <dbReference type="NCBI Taxonomy" id="243273"/>
    <lineage>
        <taxon>Bacteria</taxon>
        <taxon>Bacillati</taxon>
        <taxon>Mycoplasmatota</taxon>
        <taxon>Mycoplasmoidales</taxon>
        <taxon>Mycoplasmoidaceae</taxon>
        <taxon>Mycoplasmoides</taxon>
    </lineage>
</organism>
<protein>
    <recommendedName>
        <fullName>CDP-diacylglycerol--glycerol-3-phosphate 3-phosphatidyltransferase</fullName>
        <ecNumber>2.7.8.5</ecNumber>
    </recommendedName>
    <alternativeName>
        <fullName>Phosphatidylglycerophosphate synthase</fullName>
        <shortName>PGP synthase</shortName>
    </alternativeName>
</protein>
<comment type="function">
    <text evidence="1">This protein catalyzes the committed step to the synthesis of the acidic phospholipids.</text>
</comment>
<comment type="catalytic activity">
    <reaction>
        <text>a CDP-1,2-diacyl-sn-glycerol + sn-glycerol 3-phosphate = a 1,2-diacyl-sn-glycero-3-phospho-(1'-sn-glycero-3'-phosphate) + CMP + H(+)</text>
        <dbReference type="Rhea" id="RHEA:12593"/>
        <dbReference type="ChEBI" id="CHEBI:15378"/>
        <dbReference type="ChEBI" id="CHEBI:57597"/>
        <dbReference type="ChEBI" id="CHEBI:58332"/>
        <dbReference type="ChEBI" id="CHEBI:60110"/>
        <dbReference type="ChEBI" id="CHEBI:60377"/>
        <dbReference type="EC" id="2.7.8.5"/>
    </reaction>
</comment>
<comment type="pathway">
    <text>Phospholipid metabolism; phosphatidylglycerol biosynthesis; phosphatidylglycerol from CDP-diacylglycerol: step 1/2.</text>
</comment>
<comment type="subcellular location">
    <subcellularLocation>
        <location evidence="1">Cell membrane</location>
        <topology evidence="1">Multi-pass membrane protein</topology>
    </subcellularLocation>
</comment>
<comment type="similarity">
    <text evidence="3">Belongs to the CDP-alcohol phosphatidyltransferase class-I family.</text>
</comment>
<reference key="1">
    <citation type="journal article" date="1995" name="Science">
        <title>The minimal gene complement of Mycoplasma genitalium.</title>
        <authorList>
            <person name="Fraser C.M."/>
            <person name="Gocayne J.D."/>
            <person name="White O."/>
            <person name="Adams M.D."/>
            <person name="Clayton R.A."/>
            <person name="Fleischmann R.D."/>
            <person name="Bult C.J."/>
            <person name="Kerlavage A.R."/>
            <person name="Sutton G.G."/>
            <person name="Kelley J.M."/>
            <person name="Fritchman J.L."/>
            <person name="Weidman J.F."/>
            <person name="Small K.V."/>
            <person name="Sandusky M."/>
            <person name="Fuhrmann J.L."/>
            <person name="Nguyen D.T."/>
            <person name="Utterback T.R."/>
            <person name="Saudek D.M."/>
            <person name="Phillips C.A."/>
            <person name="Merrick J.M."/>
            <person name="Tomb J.-F."/>
            <person name="Dougherty B.A."/>
            <person name="Bott K.F."/>
            <person name="Hu P.-C."/>
            <person name="Lucier T.S."/>
            <person name="Peterson S.N."/>
            <person name="Smith H.O."/>
            <person name="Hutchison C.A. III"/>
            <person name="Venter J.C."/>
        </authorList>
    </citation>
    <scope>NUCLEOTIDE SEQUENCE [LARGE SCALE GENOMIC DNA]</scope>
    <source>
        <strain>ATCC 33530 / DSM 19775 / NCTC 10195 / G37</strain>
    </source>
</reference>
<gene>
    <name type="primary">pgsA</name>
    <name type="ordered locus">MG114</name>
</gene>
<sequence>MDWKTSEMLFPFPVYMAPLTSKFAAYKKKIANWLTVYRIFIALPTIIFIALDNQLGVLANFSVGAISISLQISLLIGGFLFLTAVISDYLDGYLARKWLAVSNFGKLWDPIADKVIINGVLIALAINGYFHFSLLIVFIVRDLVLDGMRIYAYEKKVVIAANWLGKWKTIMQMVGIVFSCFVWSFKQSEIASLNSGLFFWLLTQLPYYLAAVFSIWSFIVYNIQIYQQLKAYNSKL</sequence>
<evidence type="ECO:0000250" key="1"/>
<evidence type="ECO:0000255" key="2"/>
<evidence type="ECO:0000305" key="3"/>
<accession>P47360</accession>